<keyword id="KW-0002">3D-structure</keyword>
<keyword id="KW-0963">Cytoplasm</keyword>
<keyword id="KW-0597">Phosphoprotein</keyword>
<keyword id="KW-1267">Proteomics identification</keyword>
<keyword id="KW-1185">Reference proteome</keyword>
<keyword id="KW-0677">Repeat</keyword>
<keyword id="KW-0694">RNA-binding</keyword>
<keyword id="KW-0770">Synapse</keyword>
<accession>P51116</accession>
<accession>B2R9M2</accession>
<accession>D3DTQ1</accession>
<accession>Q86V09</accession>
<accession>Q8WUM2</accession>
<comment type="function">
    <text evidence="1 2">mRNA-binding protein that acts as a regulator of mRNAs translation and/or stability, and which is required for adult hippocampal neurogenesis (By similarity). Specifically binds to AU-rich elements (AREs) in the 3'-UTR of target mRNAs (By similarity). Promotes formation of some phase-separated membraneless compartment by undergoing liquid-liquid phase separation upon binding to AREs-containing mRNAs: mRNAs storage into membraneless compartments regulates their translation and/or stability (By similarity). Acts as a regulator of adult hippocampal neurogenesis by regulating translation and/or stability of NOG mRNA, thereby preventing NOG protein expression in the dentate gyrus (By similarity).</text>
</comment>
<comment type="subunit">
    <text evidence="2 6 8 10 12 13">Interacts with FMR1 (PubMed:11157796, PubMed:7489725, PubMed:8668200). Interacts with FXR1 (PubMed:7489725). Interacts with TDRD3 (PubMed:18664458). Interacts with HABP4 (PubMed:21771594). Interacts with CYFIP2 but not with CYFIP1 (By similarity).</text>
</comment>
<comment type="subunit">
    <text evidence="11">(Microbial infection) Interacts with Sindbis virus non-structural protein 3 (via C-terminus); this interaction inhibits the formation of host stress granules on viral mRNAs and the nsp3-FXR2 complexes bind viral RNAs and probably orchestrate the assembly of viral replication complexes.</text>
</comment>
<comment type="interaction">
    <interactant intactId="EBI-740459">
        <id>P51116</id>
    </interactant>
    <interactant intactId="EBI-541426">
        <id>Q9BXS5</id>
        <label>AP1M1</label>
    </interactant>
    <organismsDiffer>false</organismsDiffer>
    <experiments>7</experiments>
</comment>
<comment type="interaction">
    <interactant intactId="EBI-740459">
        <id>P51116</id>
    </interactant>
    <interactant intactId="EBI-297683">
        <id>Q96CW1</id>
        <label>AP2M1</label>
    </interactant>
    <organismsDiffer>false</organismsDiffer>
    <experiments>3</experiments>
</comment>
<comment type="interaction">
    <interactant intactId="EBI-740459">
        <id>P51116</id>
    </interactant>
    <interactant intactId="EBI-714543">
        <id>Q15041</id>
        <label>ARL6IP1</label>
    </interactant>
    <organismsDiffer>false</organismsDiffer>
    <experiments>3</experiments>
</comment>
<comment type="interaction">
    <interactant intactId="EBI-740459">
        <id>P51116</id>
    </interactant>
    <interactant intactId="EBI-741542">
        <id>Q9UIF8</id>
        <label>BAZ2B</label>
    </interactant>
    <organismsDiffer>false</organismsDiffer>
    <experiments>3</experiments>
</comment>
<comment type="interaction">
    <interactant intactId="EBI-740459">
        <id>P51116</id>
    </interactant>
    <interactant intactId="EBI-10321972">
        <id>Q9UIF8-2</id>
        <label>BAZ2B</label>
    </interactant>
    <organismsDiffer>false</organismsDiffer>
    <experiments>3</experiments>
</comment>
<comment type="interaction">
    <interactant intactId="EBI-740459">
        <id>P51116</id>
    </interactant>
    <interactant intactId="EBI-2105445">
        <id>P51451</id>
        <label>BLK</label>
    </interactant>
    <organismsDiffer>false</organismsDiffer>
    <experiments>3</experiments>
</comment>
<comment type="interaction">
    <interactant intactId="EBI-740459">
        <id>P51116</id>
    </interactant>
    <interactant intactId="EBI-358049">
        <id>Q13895</id>
        <label>BYSL</label>
    </interactant>
    <organismsDiffer>false</organismsDiffer>
    <experiments>8</experiments>
</comment>
<comment type="interaction">
    <interactant intactId="EBI-740459">
        <id>P51116</id>
    </interactant>
    <interactant intactId="EBI-744052">
        <id>Q5T681</id>
        <label>C10orf62</label>
    </interactant>
    <organismsDiffer>false</organismsDiffer>
    <experiments>4</experiments>
</comment>
<comment type="interaction">
    <interactant intactId="EBI-740459">
        <id>P51116</id>
    </interactant>
    <interactant intactId="EBI-351018">
        <id>Q13557</id>
        <label>CAMK2D</label>
    </interactant>
    <organismsDiffer>false</organismsDiffer>
    <experiments>3</experiments>
</comment>
<comment type="interaction">
    <interactant intactId="EBI-740459">
        <id>P51116</id>
    </interactant>
    <interactant intactId="EBI-1047080">
        <id>Q14444</id>
        <label>CAPRIN1</label>
    </interactant>
    <organismsDiffer>false</organismsDiffer>
    <experiments>3</experiments>
</comment>
<comment type="interaction">
    <interactant intactId="EBI-740459">
        <id>P51116</id>
    </interactant>
    <interactant intactId="EBI-740135">
        <id>P35520</id>
        <label>CBS</label>
    </interactant>
    <organismsDiffer>false</organismsDiffer>
    <experiments>3</experiments>
</comment>
<comment type="interaction">
    <interactant intactId="EBI-740459">
        <id>P51116</id>
    </interactant>
    <interactant intactId="EBI-3919850">
        <id>Q8IVW4</id>
        <label>CDKL3</label>
    </interactant>
    <organismsDiffer>false</organismsDiffer>
    <experiments>7</experiments>
</comment>
<comment type="interaction">
    <interactant intactId="EBI-740459">
        <id>P51116</id>
    </interactant>
    <interactant intactId="EBI-744115">
        <id>Q9C0F1</id>
        <label>CEP44</label>
    </interactant>
    <organismsDiffer>false</organismsDiffer>
    <experiments>3</experiments>
</comment>
<comment type="interaction">
    <interactant intactId="EBI-740459">
        <id>P51116</id>
    </interactant>
    <interactant intactId="EBI-747776">
        <id>Q53EZ4</id>
        <label>CEP55</label>
    </interactant>
    <organismsDiffer>false</organismsDiffer>
    <experiments>3</experiments>
</comment>
<comment type="interaction">
    <interactant intactId="EBI-740459">
        <id>P51116</id>
    </interactant>
    <interactant intactId="EBI-5453285">
        <id>Q2TBE0</id>
        <label>CWF19L2</label>
    </interactant>
    <organismsDiffer>false</organismsDiffer>
    <experiments>3</experiments>
</comment>
<comment type="interaction">
    <interactant intactId="EBI-740459">
        <id>P51116</id>
    </interactant>
    <interactant intactId="EBI-12012124">
        <id>Q04637-9</id>
        <label>EIF4G1</label>
    </interactant>
    <organismsDiffer>false</organismsDiffer>
    <experiments>3</experiments>
</comment>
<comment type="interaction">
    <interactant intactId="EBI-740459">
        <id>P51116</id>
    </interactant>
    <interactant intactId="EBI-6658203">
        <id>Q86YD7</id>
        <label>FAM90A1</label>
    </interactant>
    <organismsDiffer>false</organismsDiffer>
    <experiments>3</experiments>
</comment>
<comment type="interaction">
    <interactant intactId="EBI-740459">
        <id>P51116</id>
    </interactant>
    <interactant intactId="EBI-712740">
        <id>P09467</id>
        <label>FBP1</label>
    </interactant>
    <organismsDiffer>false</organismsDiffer>
    <experiments>3</experiments>
</comment>
<comment type="interaction">
    <interactant intactId="EBI-740459">
        <id>P51116</id>
    </interactant>
    <interactant intactId="EBI-366305">
        <id>Q06787</id>
        <label>FMR1</label>
    </interactant>
    <organismsDiffer>false</organismsDiffer>
    <experiments>7</experiments>
</comment>
<comment type="interaction">
    <interactant intactId="EBI-740459">
        <id>P51116</id>
    </interactant>
    <interactant intactId="EBI-10224470">
        <id>Q06787-8</id>
        <label>FMR1</label>
    </interactant>
    <organismsDiffer>false</organismsDiffer>
    <experiments>3</experiments>
</comment>
<comment type="interaction">
    <interactant intactId="EBI-740459">
        <id>P51116</id>
    </interactant>
    <interactant intactId="EBI-11976595">
        <id>Q8IXW7</id>
        <label>FMR1</label>
    </interactant>
    <organismsDiffer>false</organismsDiffer>
    <experiments>4</experiments>
</comment>
<comment type="interaction">
    <interactant intactId="EBI-740459">
        <id>P51116</id>
    </interactant>
    <interactant intactId="EBI-713259">
        <id>P02794</id>
        <label>FTH1</label>
    </interactant>
    <organismsDiffer>false</organismsDiffer>
    <experiments>3</experiments>
</comment>
<comment type="interaction">
    <interactant intactId="EBI-740459">
        <id>P51116</id>
    </interactant>
    <interactant intactId="EBI-713291">
        <id>P51114</id>
        <label>FXR1</label>
    </interactant>
    <organismsDiffer>false</organismsDiffer>
    <experiments>6</experiments>
</comment>
<comment type="interaction">
    <interactant intactId="EBI-740459">
        <id>P51116</id>
    </interactant>
    <interactant intactId="EBI-740459">
        <id>P51116</id>
        <label>FXR2</label>
    </interactant>
    <organismsDiffer>false</organismsDiffer>
    <experiments>4</experiments>
</comment>
<comment type="interaction">
    <interactant intactId="EBI-740459">
        <id>P51116</id>
    </interactant>
    <interactant intactId="EBI-2549423">
        <id>Q6NT76</id>
        <label>HMBOX1</label>
    </interactant>
    <organismsDiffer>false</organismsDiffer>
    <experiments>3</experiments>
</comment>
<comment type="interaction">
    <interactant intactId="EBI-740459">
        <id>P51116</id>
    </interactant>
    <interactant intactId="EBI-10212206">
        <id>Q6NT76-2</id>
        <label>HMBOX1</label>
    </interactant>
    <organismsDiffer>false</organismsDiffer>
    <experiments>3</experiments>
</comment>
<comment type="interaction">
    <interactant intactId="EBI-740459">
        <id>P51116</id>
    </interactant>
    <interactant intactId="EBI-11955401">
        <id>Q86VF2-5</id>
        <label>IGFN1</label>
    </interactant>
    <organismsDiffer>false</organismsDiffer>
    <experiments>3</experiments>
</comment>
<comment type="interaction">
    <interactant intactId="EBI-740459">
        <id>P51116</id>
    </interactant>
    <interactant intactId="EBI-10236940">
        <id>Q15735</id>
        <label>INPP5J</label>
    </interactant>
    <organismsDiffer>false</organismsDiffer>
    <experiments>3</experiments>
</comment>
<comment type="interaction">
    <interactant intactId="EBI-740459">
        <id>P51116</id>
    </interactant>
    <interactant intactId="EBI-742828">
        <id>Q14847</id>
        <label>LASP1</label>
    </interactant>
    <organismsDiffer>false</organismsDiffer>
    <experiments>3</experiments>
</comment>
<comment type="interaction">
    <interactant intactId="EBI-740459">
        <id>P51116</id>
    </interactant>
    <interactant intactId="EBI-747632">
        <id>Q9UIC8</id>
        <label>LCMT1</label>
    </interactant>
    <organismsDiffer>false</organismsDiffer>
    <experiments>2</experiments>
</comment>
<comment type="interaction">
    <interactant intactId="EBI-740459">
        <id>P51116</id>
    </interactant>
    <interactant intactId="EBI-346946">
        <id>Q13094</id>
        <label>LCP2</label>
    </interactant>
    <organismsDiffer>false</organismsDiffer>
    <experiments>7</experiments>
</comment>
<comment type="interaction">
    <interactant intactId="EBI-740459">
        <id>P51116</id>
    </interactant>
    <interactant intactId="EBI-740738">
        <id>O95751</id>
        <label>LDOC1</label>
    </interactant>
    <organismsDiffer>false</organismsDiffer>
    <experiments>3</experiments>
</comment>
<comment type="interaction">
    <interactant intactId="EBI-740459">
        <id>P51116</id>
    </interactant>
    <interactant intactId="EBI-741953">
        <id>Q9NS73</id>
        <label>MBIP</label>
    </interactant>
    <organismsDiffer>false</organismsDiffer>
    <experiments>3</experiments>
</comment>
<comment type="interaction">
    <interactant intactId="EBI-740459">
        <id>P51116</id>
    </interactant>
    <interactant intactId="EBI-348259">
        <id>Q96EZ8</id>
        <label>MCRS1</label>
    </interactant>
    <organismsDiffer>false</organismsDiffer>
    <experiments>4</experiments>
</comment>
<comment type="interaction">
    <interactant intactId="EBI-740459">
        <id>P51116</id>
    </interactant>
    <interactant intactId="EBI-399266">
        <id>Q9HAF1</id>
        <label>MEAF6</label>
    </interactant>
    <organismsDiffer>false</organismsDiffer>
    <experiments>3</experiments>
</comment>
<comment type="interaction">
    <interactant intactId="EBI-740459">
        <id>P51116</id>
    </interactant>
    <interactant intactId="EBI-1048159">
        <id>P55081</id>
        <label>MFAP1</label>
    </interactant>
    <organismsDiffer>false</organismsDiffer>
    <experiments>6</experiments>
</comment>
<comment type="interaction">
    <interactant intactId="EBI-740459">
        <id>P51116</id>
    </interactant>
    <interactant intactId="EBI-10244342">
        <id>Q5JRA6-2</id>
        <label>MIA3</label>
    </interactant>
    <organismsDiffer>false</organismsDiffer>
    <experiments>3</experiments>
</comment>
<comment type="interaction">
    <interactant intactId="EBI-740459">
        <id>P51116</id>
    </interactant>
    <interactant intactId="EBI-742459">
        <id>Q9BU76</id>
        <label>MMTAG2</label>
    </interactant>
    <organismsDiffer>false</organismsDiffer>
    <experiments>6</experiments>
</comment>
<comment type="interaction">
    <interactant intactId="EBI-740459">
        <id>P51116</id>
    </interactant>
    <interactant intactId="EBI-399246">
        <id>Q9UBU8</id>
        <label>MORF4L1</label>
    </interactant>
    <organismsDiffer>false</organismsDiffer>
    <experiments>3</experiments>
</comment>
<comment type="interaction">
    <interactant intactId="EBI-740459">
        <id>P51116</id>
    </interactant>
    <interactant intactId="EBI-10288852">
        <id>Q9UBU8-2</id>
        <label>MORF4L1</label>
    </interactant>
    <organismsDiffer>false</organismsDiffer>
    <experiments>3</experiments>
</comment>
<comment type="interaction">
    <interactant intactId="EBI-740459">
        <id>P51116</id>
    </interactant>
    <interactant intactId="EBI-1043145">
        <id>Q8N983</id>
        <label>MRPL43</label>
    </interactant>
    <organismsDiffer>false</organismsDiffer>
    <experiments>3</experiments>
</comment>
<comment type="interaction">
    <interactant intactId="EBI-740459">
        <id>P51116</id>
    </interactant>
    <interactant intactId="EBI-10977819">
        <id>Q0ZGT2-4</id>
        <label>NEXN</label>
    </interactant>
    <organismsDiffer>false</organismsDiffer>
    <experiments>3</experiments>
</comment>
<comment type="interaction">
    <interactant intactId="EBI-740459">
        <id>P51116</id>
    </interactant>
    <interactant intactId="EBI-740897">
        <id>Q9GZT8</id>
        <label>NIF3L1</label>
    </interactant>
    <organismsDiffer>false</organismsDiffer>
    <experiments>3</experiments>
</comment>
<comment type="interaction">
    <interactant intactId="EBI-740459">
        <id>P51116</id>
    </interactant>
    <interactant intactId="EBI-741141">
        <id>P15531</id>
        <label>NME1</label>
    </interactant>
    <organismsDiffer>false</organismsDiffer>
    <experiments>4</experiments>
</comment>
<comment type="interaction">
    <interactant intactId="EBI-740459">
        <id>P51116</id>
    </interactant>
    <interactant intactId="EBI-742084">
        <id>P49902</id>
        <label>NT5C2</label>
    </interactant>
    <organismsDiffer>false</organismsDiffer>
    <experiments>3</experiments>
</comment>
<comment type="interaction">
    <interactant intactId="EBI-740459">
        <id>P51116</id>
    </interactant>
    <interactant intactId="EBI-748974">
        <id>Q96CV9</id>
        <label>OPTN</label>
    </interactant>
    <organismsDiffer>false</organismsDiffer>
    <experiments>3</experiments>
</comment>
<comment type="interaction">
    <interactant intactId="EBI-740459">
        <id>P51116</id>
    </interactant>
    <interactant intactId="EBI-2607770">
        <id>Q8N7H5</id>
        <label>PAF1</label>
    </interactant>
    <organismsDiffer>false</organismsDiffer>
    <experiments>4</experiments>
</comment>
<comment type="interaction">
    <interactant intactId="EBI-740459">
        <id>P51116</id>
    </interactant>
    <interactant intactId="EBI-712261">
        <id>P22234</id>
        <label>PAICS</label>
    </interactant>
    <organismsDiffer>false</organismsDiffer>
    <experiments>4</experiments>
</comment>
<comment type="interaction">
    <interactant intactId="EBI-740459">
        <id>P51116</id>
    </interactant>
    <interactant intactId="EBI-740475">
        <id>P61457</id>
        <label>PCBD1</label>
    </interactant>
    <organismsDiffer>false</organismsDiffer>
    <experiments>6</experiments>
</comment>
<comment type="interaction">
    <interactant intactId="EBI-740459">
        <id>P51116</id>
    </interactant>
    <interactant intactId="EBI-696621">
        <id>P11309</id>
        <label>PIM1</label>
    </interactant>
    <organismsDiffer>false</organismsDiffer>
    <experiments>3</experiments>
</comment>
<comment type="interaction">
    <interactant intactId="EBI-740459">
        <id>P51116</id>
    </interactant>
    <interactant intactId="EBI-739990">
        <id>Q96HA1</id>
        <label>POM121</label>
    </interactant>
    <organismsDiffer>false</organismsDiffer>
    <experiments>4</experiments>
</comment>
<comment type="interaction">
    <interactant intactId="EBI-740459">
        <id>P51116</id>
    </interactant>
    <interactant intactId="EBI-2860740">
        <id>Q96QH2</id>
        <label>PRAM1</label>
    </interactant>
    <organismsDiffer>false</organismsDiffer>
    <experiments>7</experiments>
</comment>
<comment type="interaction">
    <interactant intactId="EBI-740459">
        <id>P51116</id>
    </interactant>
    <interactant intactId="EBI-712344">
        <id>Q03393</id>
        <label>PTS</label>
    </interactant>
    <organismsDiffer>false</organismsDiffer>
    <experiments>4</experiments>
</comment>
<comment type="interaction">
    <interactant intactId="EBI-740459">
        <id>P51116</id>
    </interactant>
    <interactant intactId="EBI-712367">
        <id>Q9UI14</id>
        <label>RABAC1</label>
    </interactant>
    <organismsDiffer>false</organismsDiffer>
    <experiments>3</experiments>
</comment>
<comment type="interaction">
    <interactant intactId="EBI-740459">
        <id>P51116</id>
    </interactant>
    <interactant intactId="EBI-7543896">
        <id>O95171</id>
        <label>SCEL</label>
    </interactant>
    <organismsDiffer>false</organismsDiffer>
    <experiments>4</experiments>
</comment>
<comment type="interaction">
    <interactant intactId="EBI-740459">
        <id>P51116</id>
    </interactant>
    <interactant intactId="EBI-593303">
        <id>P78362</id>
        <label>SRPK2</label>
    </interactant>
    <organismsDiffer>false</organismsDiffer>
    <experiments>4</experiments>
</comment>
<comment type="interaction">
    <interactant intactId="EBI-740459">
        <id>P51116</id>
    </interactant>
    <interactant intactId="EBI-10246152">
        <id>Q5T7P8-2</id>
        <label>SYT6</label>
    </interactant>
    <organismsDiffer>false</organismsDiffer>
    <experiments>6</experiments>
</comment>
<comment type="interaction">
    <interactant intactId="EBI-740459">
        <id>P51116</id>
    </interactant>
    <interactant intactId="EBI-747142">
        <id>Q96C24</id>
        <label>SYTL4</label>
    </interactant>
    <organismsDiffer>false</organismsDiffer>
    <experiments>6</experiments>
</comment>
<comment type="interaction">
    <interactant intactId="EBI-740459">
        <id>P51116</id>
    </interactant>
    <interactant intactId="EBI-8787464">
        <id>Q9NU19</id>
        <label>TBC1D22B</label>
    </interactant>
    <organismsDiffer>false</organismsDiffer>
    <experiments>5</experiments>
</comment>
<comment type="interaction">
    <interactant intactId="EBI-740459">
        <id>P51116</id>
    </interactant>
    <interactant intactId="EBI-347762">
        <id>Q14157</id>
        <label>UBAP2L</label>
    </interactant>
    <organismsDiffer>false</organismsDiffer>
    <experiments>5</experiments>
</comment>
<comment type="interaction">
    <interactant intactId="EBI-740459">
        <id>P51116</id>
    </interactant>
    <interactant intactId="EBI-515331">
        <id>P07947</id>
        <label>YES1</label>
    </interactant>
    <organismsDiffer>false</organismsDiffer>
    <experiments>6</experiments>
</comment>
<comment type="interaction">
    <interactant intactId="EBI-740459">
        <id>P51116</id>
    </interactant>
    <interactant intactId="EBI-723574">
        <id>O15209</id>
        <label>ZBTB22</label>
    </interactant>
    <organismsDiffer>false</organismsDiffer>
    <experiments>3</experiments>
</comment>
<comment type="interaction">
    <interactant intactId="EBI-740459">
        <id>P51116</id>
    </interactant>
    <interactant intactId="EBI-2682299">
        <id>Q96NC0</id>
        <label>ZMAT2</label>
    </interactant>
    <organismsDiffer>false</organismsDiffer>
    <experiments>6</experiments>
</comment>
<comment type="interaction">
    <interactant intactId="EBI-740459">
        <id>P51116</id>
    </interactant>
    <interactant intactId="EBI-749023">
        <id>Q9UNY5</id>
        <label>ZNF232</label>
    </interactant>
    <organismsDiffer>false</organismsDiffer>
    <experiments>3</experiments>
</comment>
<comment type="interaction">
    <interactant intactId="EBI-740459">
        <id>P51116</id>
    </interactant>
    <interactant intactId="EBI-25492388">
        <id>PRO_0000449621</id>
        <label>rep</label>
        <dbReference type="UniProtKB" id="P0DTD1"/>
    </interactant>
    <organismsDiffer>true</organismsDiffer>
    <experiments>5</experiments>
</comment>
<comment type="interaction">
    <interactant intactId="EBI-740459">
        <id>P51116</id>
    </interactant>
    <interactant intactId="EBI-25475877">
        <id>PRO_0000449627</id>
        <label>rep</label>
        <dbReference type="UniProtKB" id="P0DTD1"/>
    </interactant>
    <organismsDiffer>true</organismsDiffer>
    <experiments>3</experiments>
</comment>
<comment type="subcellular location">
    <subcellularLocation>
        <location evidence="1">Cytoplasm</location>
        <location evidence="1">Cytoplasmic ribonucleoprotein granule</location>
    </subcellularLocation>
    <subcellularLocation>
        <location evidence="14">Cytoplasm</location>
    </subcellularLocation>
    <subcellularLocation>
        <location evidence="2">Postsynapse</location>
    </subcellularLocation>
    <text evidence="1 2">Specifically localizes to cytoplasmic ribonucleoprotein membraneless compartments (By similarity). Localization to the post-synaptic region is dependent on FMR1 (By similarity).</text>
</comment>
<comment type="tissue specificity">
    <text evidence="14">Expressed in all tissues examined including heart, brain, kidney and testis (PubMed:9259278). In brain, present at high level in neurons and especially in the Purkinje cells at the interface between the granular layer and the molecular layer (at protein level) (PubMed:9259278).</text>
</comment>
<comment type="domain">
    <text evidence="9">The tandem Agenet-like domains preferentially recognize trimethylated histone peptides.</text>
</comment>
<comment type="domain">
    <text evidence="1">Disordered region at the C-terminus undergoes liquid-liquid phase separation (LLPS) for the formation of a membraneless compartment that stores mRNAs.</text>
</comment>
<comment type="similarity">
    <text evidence="16">Belongs to the FMR1 family.</text>
</comment>
<sequence>MGGLASGGDVEPGLPVEVRGSNGAFYKGFVKDVHEDSVTIFFENNWQSERQIPFGDVRLPPPADYNKEITEGDEVEVYSRANEQEPCGWWLARVRMMKGDFYVIEYAACDATYNEIVTLERLRPVNPNPLATKGSFFKVTMAVPEDLREACSNENVHKEFKKALGANCIFLNITNSELFILSTTEAPVKRASLLGDMHFRSLRTKLLLMSRNEEATKHLETSKQLAAAFQEEFTVREDLMGLAIGTHGANIQQARKVPGVTAIELGEETCTFRIYGETPEACRQARSYLEFSEDSVQVPRNLVGKVIGKNGKVIQEIVDKSGVVRVRVEGDNDKKNPREEGMVPFIFVGTRENISNAQALLEYHLSYLQEVEQLRLERLQIDEQLRQIGLGFRPPGSGRGSGGSDKAGYSTDESSSSSLHATRTYGGSYGGRGRGRRTGGPAYGPSSDVSTASETESEKREEPNRAGPGDRDPPTRGEESRRRPTGGRGRGPPPAPRPTSRYNSSSISSVLKDPDSNPYSLLDTSEPEPPVDSEPGEPPPASARRRRSRRRRTDEDRTVMDGGLESDGPNMTENGLEDESRPQRRNRSRRRRNRGNRTDGSISGDRQPVTVADYISRAESQSRQRPPLERTKPSEDSLSGQKGDSVSKLPKGPSENGELSAPLELGSMVNGVS</sequence>
<proteinExistence type="evidence at protein level"/>
<evidence type="ECO:0000250" key="1">
    <source>
        <dbReference type="UniProtKB" id="Q61584"/>
    </source>
</evidence>
<evidence type="ECO:0000250" key="2">
    <source>
        <dbReference type="UniProtKB" id="Q9WVR4"/>
    </source>
</evidence>
<evidence type="ECO:0000255" key="3">
    <source>
        <dbReference type="PROSITE-ProRule" id="PRU00117"/>
    </source>
</evidence>
<evidence type="ECO:0000255" key="4">
    <source>
        <dbReference type="PROSITE-ProRule" id="PRU00973"/>
    </source>
</evidence>
<evidence type="ECO:0000256" key="5">
    <source>
        <dbReference type="SAM" id="MobiDB-lite"/>
    </source>
</evidence>
<evidence type="ECO:0000269" key="6">
    <source>
    </source>
</evidence>
<evidence type="ECO:0000269" key="7">
    <source>
    </source>
</evidence>
<evidence type="ECO:0000269" key="8">
    <source>
    </source>
</evidence>
<evidence type="ECO:0000269" key="9">
    <source>
    </source>
</evidence>
<evidence type="ECO:0000269" key="10">
    <source>
    </source>
</evidence>
<evidence type="ECO:0000269" key="11">
    <source>
    </source>
</evidence>
<evidence type="ECO:0000269" key="12">
    <source>
    </source>
</evidence>
<evidence type="ECO:0000269" key="13">
    <source>
    </source>
</evidence>
<evidence type="ECO:0000269" key="14">
    <source>
    </source>
</evidence>
<evidence type="ECO:0000303" key="15">
    <source>
    </source>
</evidence>
<evidence type="ECO:0000305" key="16"/>
<evidence type="ECO:0000312" key="17">
    <source>
        <dbReference type="HGNC" id="HGNC:4024"/>
    </source>
</evidence>
<evidence type="ECO:0007744" key="18">
    <source>
    </source>
</evidence>
<evidence type="ECO:0007744" key="19">
    <source>
    </source>
</evidence>
<evidence type="ECO:0007744" key="20">
    <source>
    </source>
</evidence>
<evidence type="ECO:0007744" key="21">
    <source>
    </source>
</evidence>
<evidence type="ECO:0007744" key="22">
    <source>
    </source>
</evidence>
<evidence type="ECO:0007744" key="23">
    <source>
    </source>
</evidence>
<evidence type="ECO:0007744" key="24">
    <source>
    </source>
</evidence>
<evidence type="ECO:0007829" key="25">
    <source>
        <dbReference type="PDB" id="3H8Z"/>
    </source>
</evidence>
<dbReference type="EMBL" id="U31501">
    <property type="protein sequence ID" value="AAC50292.1"/>
    <property type="molecule type" value="mRNA"/>
</dbReference>
<dbReference type="EMBL" id="BT009817">
    <property type="protein sequence ID" value="AAP88819.1"/>
    <property type="molecule type" value="mRNA"/>
</dbReference>
<dbReference type="EMBL" id="AK313836">
    <property type="protein sequence ID" value="BAG36569.1"/>
    <property type="molecule type" value="mRNA"/>
</dbReference>
<dbReference type="EMBL" id="CH471108">
    <property type="protein sequence ID" value="EAW90154.1"/>
    <property type="molecule type" value="Genomic_DNA"/>
</dbReference>
<dbReference type="EMBL" id="CH471108">
    <property type="protein sequence ID" value="EAW90155.1"/>
    <property type="molecule type" value="Genomic_DNA"/>
</dbReference>
<dbReference type="EMBL" id="BC020090">
    <property type="protein sequence ID" value="AAH20090.1"/>
    <property type="molecule type" value="mRNA"/>
</dbReference>
<dbReference type="EMBL" id="BC051907">
    <property type="protein sequence ID" value="AAH51907.1"/>
    <property type="molecule type" value="mRNA"/>
</dbReference>
<dbReference type="EMBL" id="BC067272">
    <property type="protein sequence ID" value="AAH67272.1"/>
    <property type="molecule type" value="mRNA"/>
</dbReference>
<dbReference type="EMBL" id="AF044263">
    <property type="protein sequence ID" value="AAC03357.1"/>
    <property type="molecule type" value="Genomic_DNA"/>
</dbReference>
<dbReference type="CCDS" id="CCDS45604.1"/>
<dbReference type="PIR" id="S60173">
    <property type="entry name" value="S60173"/>
</dbReference>
<dbReference type="RefSeq" id="NP_004851.2">
    <property type="nucleotide sequence ID" value="NM_004860.4"/>
</dbReference>
<dbReference type="PDB" id="3H8Z">
    <property type="method" value="X-ray"/>
    <property type="resolution" value="1.92 A"/>
    <property type="chains" value="A=13-136"/>
</dbReference>
<dbReference type="PDBsum" id="3H8Z"/>
<dbReference type="SMR" id="P51116"/>
<dbReference type="BioGRID" id="114890">
    <property type="interactions" value="453"/>
</dbReference>
<dbReference type="ComplexPortal" id="CPX-8322">
    <property type="entry name" value="FMR1-FXR2 RNA-binding complex"/>
</dbReference>
<dbReference type="ComplexPortal" id="CPX-8341">
    <property type="entry name" value="FXR2 RNA-binding homodimer"/>
</dbReference>
<dbReference type="ComplexPortal" id="CPX-8342">
    <property type="entry name" value="FXR1-FXR2 RNA-binding complex"/>
</dbReference>
<dbReference type="FunCoup" id="P51116">
    <property type="interactions" value="1105"/>
</dbReference>
<dbReference type="IntAct" id="P51116">
    <property type="interactions" value="405"/>
</dbReference>
<dbReference type="MINT" id="P51116"/>
<dbReference type="STRING" id="9606.ENSP00000250113"/>
<dbReference type="BindingDB" id="P51116"/>
<dbReference type="ChEMBL" id="CHEMBL5169136"/>
<dbReference type="CarbonylDB" id="P51116"/>
<dbReference type="GlyCosmos" id="P51116">
    <property type="glycosylation" value="1 site, 1 glycan"/>
</dbReference>
<dbReference type="GlyGen" id="P51116">
    <property type="glycosylation" value="1 site, 1 O-linked glycan (1 site)"/>
</dbReference>
<dbReference type="iPTMnet" id="P51116"/>
<dbReference type="MetOSite" id="P51116"/>
<dbReference type="PhosphoSitePlus" id="P51116"/>
<dbReference type="SwissPalm" id="P51116"/>
<dbReference type="BioMuta" id="FXR2"/>
<dbReference type="DMDM" id="90177782"/>
<dbReference type="jPOST" id="P51116"/>
<dbReference type="MassIVE" id="P51116"/>
<dbReference type="PaxDb" id="9606-ENSP00000250113"/>
<dbReference type="PeptideAtlas" id="P51116"/>
<dbReference type="ProteomicsDB" id="56281"/>
<dbReference type="Pumba" id="P51116"/>
<dbReference type="ABCD" id="P51116">
    <property type="antibodies" value="5 sequenced antibodies"/>
</dbReference>
<dbReference type="Antibodypedia" id="4407">
    <property type="antibodies" value="344 antibodies from 35 providers"/>
</dbReference>
<dbReference type="DNASU" id="9513"/>
<dbReference type="Ensembl" id="ENST00000250113.12">
    <property type="protein sequence ID" value="ENSP00000250113.7"/>
    <property type="gene ID" value="ENSG00000129245.13"/>
</dbReference>
<dbReference type="GeneID" id="9513"/>
<dbReference type="KEGG" id="hsa:9513"/>
<dbReference type="MANE-Select" id="ENST00000250113.12">
    <property type="protein sequence ID" value="ENSP00000250113.7"/>
    <property type="RefSeq nucleotide sequence ID" value="NM_004860.4"/>
    <property type="RefSeq protein sequence ID" value="NP_004851.2"/>
</dbReference>
<dbReference type="UCSC" id="uc002gia.3">
    <property type="organism name" value="human"/>
</dbReference>
<dbReference type="AGR" id="HGNC:4024"/>
<dbReference type="CTD" id="9513"/>
<dbReference type="DisGeNET" id="9513"/>
<dbReference type="GeneCards" id="FXR2"/>
<dbReference type="HGNC" id="HGNC:4024">
    <property type="gene designation" value="FXR2"/>
</dbReference>
<dbReference type="HPA" id="ENSG00000129245">
    <property type="expression patterns" value="Tissue enhanced (skeletal)"/>
</dbReference>
<dbReference type="MIM" id="605339">
    <property type="type" value="gene"/>
</dbReference>
<dbReference type="neXtProt" id="NX_P51116"/>
<dbReference type="OpenTargets" id="ENSG00000129245"/>
<dbReference type="PharmGKB" id="PA28440"/>
<dbReference type="VEuPathDB" id="HostDB:ENSG00000129245"/>
<dbReference type="eggNOG" id="ENOG502QPKJ">
    <property type="taxonomic scope" value="Eukaryota"/>
</dbReference>
<dbReference type="GeneTree" id="ENSGT00950000183189"/>
<dbReference type="HOGENOM" id="CLU_020699_3_0_1"/>
<dbReference type="InParanoid" id="P51116"/>
<dbReference type="OMA" id="EDRTIMD"/>
<dbReference type="OrthoDB" id="424249at2759"/>
<dbReference type="PAN-GO" id="P51116">
    <property type="GO annotations" value="22 GO annotations based on evolutionary models"/>
</dbReference>
<dbReference type="PhylomeDB" id="P51116"/>
<dbReference type="TreeFam" id="TF105427"/>
<dbReference type="PathwayCommons" id="P51116"/>
<dbReference type="SignaLink" id="P51116"/>
<dbReference type="BioGRID-ORCS" id="9513">
    <property type="hits" value="12 hits in 1161 CRISPR screens"/>
</dbReference>
<dbReference type="CD-CODE" id="232F8A39">
    <property type="entry name" value="P-body"/>
</dbReference>
<dbReference type="CD-CODE" id="DEE660B4">
    <property type="entry name" value="Stress granule"/>
</dbReference>
<dbReference type="CD-CODE" id="FB4E32DD">
    <property type="entry name" value="Presynaptic clusters and postsynaptic densities"/>
</dbReference>
<dbReference type="ChiTaRS" id="FXR2">
    <property type="organism name" value="human"/>
</dbReference>
<dbReference type="EvolutionaryTrace" id="P51116"/>
<dbReference type="GeneWiki" id="FXR2"/>
<dbReference type="GenomeRNAi" id="9513"/>
<dbReference type="Pharos" id="P51116">
    <property type="development level" value="Tbio"/>
</dbReference>
<dbReference type="PRO" id="PR:P51116"/>
<dbReference type="Proteomes" id="UP000005640">
    <property type="component" value="Chromosome 17"/>
</dbReference>
<dbReference type="RNAct" id="P51116">
    <property type="molecule type" value="protein"/>
</dbReference>
<dbReference type="Bgee" id="ENSG00000129245">
    <property type="expression patterns" value="Expressed in apex of heart and 206 other cell types or tissues"/>
</dbReference>
<dbReference type="ExpressionAtlas" id="P51116">
    <property type="expression patterns" value="baseline and differential"/>
</dbReference>
<dbReference type="GO" id="GO:0005737">
    <property type="term" value="C:cytoplasm"/>
    <property type="evidence" value="ECO:0000314"/>
    <property type="project" value="CACAO"/>
</dbReference>
<dbReference type="GO" id="GO:0010494">
    <property type="term" value="C:cytoplasmic stress granule"/>
    <property type="evidence" value="ECO:0000314"/>
    <property type="project" value="UniProtKB"/>
</dbReference>
<dbReference type="GO" id="GO:0005829">
    <property type="term" value="C:cytosol"/>
    <property type="evidence" value="ECO:0000314"/>
    <property type="project" value="HPA"/>
</dbReference>
<dbReference type="GO" id="GO:0016020">
    <property type="term" value="C:membrane"/>
    <property type="evidence" value="ECO:0007005"/>
    <property type="project" value="UniProtKB"/>
</dbReference>
<dbReference type="GO" id="GO:0043005">
    <property type="term" value="C:neuron projection"/>
    <property type="evidence" value="ECO:0000318"/>
    <property type="project" value="GO_Central"/>
</dbReference>
<dbReference type="GO" id="GO:0005634">
    <property type="term" value="C:nucleus"/>
    <property type="evidence" value="ECO:0000318"/>
    <property type="project" value="GO_Central"/>
</dbReference>
<dbReference type="GO" id="GO:0098794">
    <property type="term" value="C:postsynapse"/>
    <property type="evidence" value="ECO:0007669"/>
    <property type="project" value="UniProtKB-SubCell"/>
</dbReference>
<dbReference type="GO" id="GO:0098793">
    <property type="term" value="C:presynapse"/>
    <property type="evidence" value="ECO:0007669"/>
    <property type="project" value="GOC"/>
</dbReference>
<dbReference type="GO" id="GO:0042802">
    <property type="term" value="F:identical protein binding"/>
    <property type="evidence" value="ECO:0000353"/>
    <property type="project" value="IntAct"/>
</dbReference>
<dbReference type="GO" id="GO:0003730">
    <property type="term" value="F:mRNA 3'-UTR binding"/>
    <property type="evidence" value="ECO:0000318"/>
    <property type="project" value="GO_Central"/>
</dbReference>
<dbReference type="GO" id="GO:0046982">
    <property type="term" value="F:protein heterodimerization activity"/>
    <property type="evidence" value="ECO:0000314"/>
    <property type="project" value="UniProtKB"/>
</dbReference>
<dbReference type="GO" id="GO:0042803">
    <property type="term" value="F:protein homodimerization activity"/>
    <property type="evidence" value="ECO:0000314"/>
    <property type="project" value="UniProtKB"/>
</dbReference>
<dbReference type="GO" id="GO:0003723">
    <property type="term" value="F:RNA binding"/>
    <property type="evidence" value="ECO:0007005"/>
    <property type="project" value="UniProtKB"/>
</dbReference>
<dbReference type="GO" id="GO:0045182">
    <property type="term" value="F:translation regulator activity"/>
    <property type="evidence" value="ECO:0000318"/>
    <property type="project" value="GO_Central"/>
</dbReference>
<dbReference type="GO" id="GO:0048513">
    <property type="term" value="P:animal organ development"/>
    <property type="evidence" value="ECO:0000318"/>
    <property type="project" value="GO_Central"/>
</dbReference>
<dbReference type="GO" id="GO:0021542">
    <property type="term" value="P:dentate gyrus development"/>
    <property type="evidence" value="ECO:0000250"/>
    <property type="project" value="UniProtKB"/>
</dbReference>
<dbReference type="GO" id="GO:0061157">
    <property type="term" value="P:mRNA destabilization"/>
    <property type="evidence" value="ECO:0000250"/>
    <property type="project" value="UniProtKB"/>
</dbReference>
<dbReference type="GO" id="GO:0051028">
    <property type="term" value="P:mRNA transport"/>
    <property type="evidence" value="ECO:0000318"/>
    <property type="project" value="GO_Central"/>
</dbReference>
<dbReference type="GO" id="GO:0048170">
    <property type="term" value="P:positive regulation of long-term neuronal synaptic plasticity"/>
    <property type="evidence" value="ECO:0000318"/>
    <property type="project" value="GO_Central"/>
</dbReference>
<dbReference type="GO" id="GO:0045727">
    <property type="term" value="P:positive regulation of translation"/>
    <property type="evidence" value="ECO:0000318"/>
    <property type="project" value="GO_Central"/>
</dbReference>
<dbReference type="GO" id="GO:0043488">
    <property type="term" value="P:regulation of mRNA stability"/>
    <property type="evidence" value="ECO:0000318"/>
    <property type="project" value="GO_Central"/>
</dbReference>
<dbReference type="GO" id="GO:0099577">
    <property type="term" value="P:regulation of translation at presynapse, modulating synaptic transmission"/>
    <property type="evidence" value="ECO:0000318"/>
    <property type="project" value="GO_Central"/>
</dbReference>
<dbReference type="CDD" id="cd22505">
    <property type="entry name" value="KH_I_FXR2_rpt1"/>
    <property type="match status" value="1"/>
</dbReference>
<dbReference type="CDD" id="cd22508">
    <property type="entry name" value="KH_I_FXR2_rpt2"/>
    <property type="match status" value="1"/>
</dbReference>
<dbReference type="CDD" id="cd22511">
    <property type="entry name" value="KH_I_FXR2_rpt3"/>
    <property type="match status" value="1"/>
</dbReference>
<dbReference type="CDD" id="cd20473">
    <property type="entry name" value="Tudor_Agenet_FXR2_rpt1"/>
    <property type="match status" value="1"/>
</dbReference>
<dbReference type="CDD" id="cd20476">
    <property type="entry name" value="Tudor_Agenet_FXR2_rpt2"/>
    <property type="match status" value="1"/>
</dbReference>
<dbReference type="FunFam" id="2.30.30.140:FF:000001">
    <property type="entry name" value="Fragile X mental retardation 1, isoform CRA_e"/>
    <property type="match status" value="1"/>
</dbReference>
<dbReference type="FunFam" id="2.30.30.140:FF:000002">
    <property type="entry name" value="Fragile X mental retardation 1, isoform CRA_e"/>
    <property type="match status" value="1"/>
</dbReference>
<dbReference type="FunFam" id="3.30.1370.10:FF:000004">
    <property type="entry name" value="Fragile X mental retardation 1, isoform CRA_e"/>
    <property type="match status" value="1"/>
</dbReference>
<dbReference type="FunFam" id="3.30.1370.10:FF:000017">
    <property type="entry name" value="Fragile X mental retardation syndrome-related protein 1"/>
    <property type="match status" value="1"/>
</dbReference>
<dbReference type="Gene3D" id="2.30.30.140">
    <property type="match status" value="2"/>
</dbReference>
<dbReference type="Gene3D" id="3.30.1370.10">
    <property type="entry name" value="K Homology domain, type 1"/>
    <property type="match status" value="2"/>
</dbReference>
<dbReference type="InterPro" id="IPR008395">
    <property type="entry name" value="Agenet-like_dom"/>
</dbReference>
<dbReference type="InterPro" id="IPR040148">
    <property type="entry name" value="FMR1"/>
</dbReference>
<dbReference type="InterPro" id="IPR022034">
    <property type="entry name" value="FMR1-like_C_core"/>
</dbReference>
<dbReference type="InterPro" id="IPR040472">
    <property type="entry name" value="FMRP_KH0"/>
</dbReference>
<dbReference type="InterPro" id="IPR032172">
    <property type="entry name" value="FXR1_C1"/>
</dbReference>
<dbReference type="InterPro" id="IPR004087">
    <property type="entry name" value="KH_dom"/>
</dbReference>
<dbReference type="InterPro" id="IPR004088">
    <property type="entry name" value="KH_dom_type_1"/>
</dbReference>
<dbReference type="InterPro" id="IPR036612">
    <property type="entry name" value="KH_dom_type_1_sf"/>
</dbReference>
<dbReference type="InterPro" id="IPR047422">
    <property type="entry name" value="KH_I_FXR2_rpt1"/>
</dbReference>
<dbReference type="InterPro" id="IPR047424">
    <property type="entry name" value="KH_I_FXR2_rpt2"/>
</dbReference>
<dbReference type="InterPro" id="IPR047421">
    <property type="entry name" value="Tudor_Agenet_FXR2_rpt1"/>
</dbReference>
<dbReference type="InterPro" id="IPR047420">
    <property type="entry name" value="Tudor_Agenet_FXR2_rpt2"/>
</dbReference>
<dbReference type="InterPro" id="IPR041560">
    <property type="entry name" value="Tudor_FRM1"/>
</dbReference>
<dbReference type="PANTHER" id="PTHR10603">
    <property type="entry name" value="FRAGILE X MENTAL RETARDATION SYNDROME-RELATED PROTEIN"/>
    <property type="match status" value="1"/>
</dbReference>
<dbReference type="PANTHER" id="PTHR10603:SF3">
    <property type="entry name" value="RNA-BINDING PROTEIN FXR2"/>
    <property type="match status" value="1"/>
</dbReference>
<dbReference type="Pfam" id="PF05641">
    <property type="entry name" value="Agenet"/>
    <property type="match status" value="1"/>
</dbReference>
<dbReference type="Pfam" id="PF12235">
    <property type="entry name" value="FXMRP1_C_core"/>
    <property type="match status" value="1"/>
</dbReference>
<dbReference type="Pfam" id="PF16096">
    <property type="entry name" value="FXR_C1"/>
    <property type="match status" value="1"/>
</dbReference>
<dbReference type="Pfam" id="PF00013">
    <property type="entry name" value="KH_1"/>
    <property type="match status" value="2"/>
</dbReference>
<dbReference type="Pfam" id="PF17904">
    <property type="entry name" value="KH_9"/>
    <property type="match status" value="1"/>
</dbReference>
<dbReference type="Pfam" id="PF18336">
    <property type="entry name" value="Tudor_FRX1"/>
    <property type="match status" value="1"/>
</dbReference>
<dbReference type="SMART" id="SM00322">
    <property type="entry name" value="KH"/>
    <property type="match status" value="2"/>
</dbReference>
<dbReference type="SUPFAM" id="SSF54791">
    <property type="entry name" value="Eukaryotic type KH-domain (KH-domain type I)"/>
    <property type="match status" value="2"/>
</dbReference>
<dbReference type="PROSITE" id="PS51641">
    <property type="entry name" value="AGENET_LIKE"/>
    <property type="match status" value="2"/>
</dbReference>
<dbReference type="PROSITE" id="PS50084">
    <property type="entry name" value="KH_TYPE_1"/>
    <property type="match status" value="2"/>
</dbReference>
<reference key="1">
    <citation type="journal article" date="1995" name="EMBO J.">
        <title>The fragile X mental retardation syndrome protein interacts with novel homologs FXR1 and FXR2.</title>
        <authorList>
            <person name="Zhang Y."/>
            <person name="O'Connor J.P."/>
            <person name="Siomi M.C."/>
            <person name="Srinivasan S."/>
            <person name="Dutra A."/>
            <person name="Nussbaum R.L."/>
            <person name="Dreyfuss G."/>
        </authorList>
    </citation>
    <scope>NUCLEOTIDE SEQUENCE [MRNA]</scope>
    <scope>INTERACTION WITH FMR1 AND FXR1</scope>
    <source>
        <tissue>Brain</tissue>
    </source>
</reference>
<reference key="2">
    <citation type="submission" date="2003-08" db="EMBL/GenBank/DDBJ databases">
        <title>Cloning of human full-length CDSs in BD Creator(TM) system donor vector.</title>
        <authorList>
            <person name="Kalnine N."/>
            <person name="Chen X."/>
            <person name="Rolfs A."/>
            <person name="Halleck A."/>
            <person name="Hines L."/>
            <person name="Eisenstein S."/>
            <person name="Koundinya M."/>
            <person name="Raphael J."/>
            <person name="Moreira D."/>
            <person name="Kelley T."/>
            <person name="LaBaer J."/>
            <person name="Lin Y."/>
            <person name="Phelan M."/>
            <person name="Farmer A."/>
        </authorList>
    </citation>
    <scope>NUCLEOTIDE SEQUENCE [LARGE SCALE MRNA]</scope>
</reference>
<reference key="3">
    <citation type="journal article" date="2004" name="Nat. Genet.">
        <title>Complete sequencing and characterization of 21,243 full-length human cDNAs.</title>
        <authorList>
            <person name="Ota T."/>
            <person name="Suzuki Y."/>
            <person name="Nishikawa T."/>
            <person name="Otsuki T."/>
            <person name="Sugiyama T."/>
            <person name="Irie R."/>
            <person name="Wakamatsu A."/>
            <person name="Hayashi K."/>
            <person name="Sato H."/>
            <person name="Nagai K."/>
            <person name="Kimura K."/>
            <person name="Makita H."/>
            <person name="Sekine M."/>
            <person name="Obayashi M."/>
            <person name="Nishi T."/>
            <person name="Shibahara T."/>
            <person name="Tanaka T."/>
            <person name="Ishii S."/>
            <person name="Yamamoto J."/>
            <person name="Saito K."/>
            <person name="Kawai Y."/>
            <person name="Isono Y."/>
            <person name="Nakamura Y."/>
            <person name="Nagahari K."/>
            <person name="Murakami K."/>
            <person name="Yasuda T."/>
            <person name="Iwayanagi T."/>
            <person name="Wagatsuma M."/>
            <person name="Shiratori A."/>
            <person name="Sudo H."/>
            <person name="Hosoiri T."/>
            <person name="Kaku Y."/>
            <person name="Kodaira H."/>
            <person name="Kondo H."/>
            <person name="Sugawara M."/>
            <person name="Takahashi M."/>
            <person name="Kanda K."/>
            <person name="Yokoi T."/>
            <person name="Furuya T."/>
            <person name="Kikkawa E."/>
            <person name="Omura Y."/>
            <person name="Abe K."/>
            <person name="Kamihara K."/>
            <person name="Katsuta N."/>
            <person name="Sato K."/>
            <person name="Tanikawa M."/>
            <person name="Yamazaki M."/>
            <person name="Ninomiya K."/>
            <person name="Ishibashi T."/>
            <person name="Yamashita H."/>
            <person name="Murakawa K."/>
            <person name="Fujimori K."/>
            <person name="Tanai H."/>
            <person name="Kimata M."/>
            <person name="Watanabe M."/>
            <person name="Hiraoka S."/>
            <person name="Chiba Y."/>
            <person name="Ishida S."/>
            <person name="Ono Y."/>
            <person name="Takiguchi S."/>
            <person name="Watanabe S."/>
            <person name="Yosida M."/>
            <person name="Hotuta T."/>
            <person name="Kusano J."/>
            <person name="Kanehori K."/>
            <person name="Takahashi-Fujii A."/>
            <person name="Hara H."/>
            <person name="Tanase T.-O."/>
            <person name="Nomura Y."/>
            <person name="Togiya S."/>
            <person name="Komai F."/>
            <person name="Hara R."/>
            <person name="Takeuchi K."/>
            <person name="Arita M."/>
            <person name="Imose N."/>
            <person name="Musashino K."/>
            <person name="Yuuki H."/>
            <person name="Oshima A."/>
            <person name="Sasaki N."/>
            <person name="Aotsuka S."/>
            <person name="Yoshikawa Y."/>
            <person name="Matsunawa H."/>
            <person name="Ichihara T."/>
            <person name="Shiohata N."/>
            <person name="Sano S."/>
            <person name="Moriya S."/>
            <person name="Momiyama H."/>
            <person name="Satoh N."/>
            <person name="Takami S."/>
            <person name="Terashima Y."/>
            <person name="Suzuki O."/>
            <person name="Nakagawa S."/>
            <person name="Senoh A."/>
            <person name="Mizoguchi H."/>
            <person name="Goto Y."/>
            <person name="Shimizu F."/>
            <person name="Wakebe H."/>
            <person name="Hishigaki H."/>
            <person name="Watanabe T."/>
            <person name="Sugiyama A."/>
            <person name="Takemoto M."/>
            <person name="Kawakami B."/>
            <person name="Yamazaki M."/>
            <person name="Watanabe K."/>
            <person name="Kumagai A."/>
            <person name="Itakura S."/>
            <person name="Fukuzumi Y."/>
            <person name="Fujimori Y."/>
            <person name="Komiyama M."/>
            <person name="Tashiro H."/>
            <person name="Tanigami A."/>
            <person name="Fujiwara T."/>
            <person name="Ono T."/>
            <person name="Yamada K."/>
            <person name="Fujii Y."/>
            <person name="Ozaki K."/>
            <person name="Hirao M."/>
            <person name="Ohmori Y."/>
            <person name="Kawabata A."/>
            <person name="Hikiji T."/>
            <person name="Kobatake N."/>
            <person name="Inagaki H."/>
            <person name="Ikema Y."/>
            <person name="Okamoto S."/>
            <person name="Okitani R."/>
            <person name="Kawakami T."/>
            <person name="Noguchi S."/>
            <person name="Itoh T."/>
            <person name="Shigeta K."/>
            <person name="Senba T."/>
            <person name="Matsumura K."/>
            <person name="Nakajima Y."/>
            <person name="Mizuno T."/>
            <person name="Morinaga M."/>
            <person name="Sasaki M."/>
            <person name="Togashi T."/>
            <person name="Oyama M."/>
            <person name="Hata H."/>
            <person name="Watanabe M."/>
            <person name="Komatsu T."/>
            <person name="Mizushima-Sugano J."/>
            <person name="Satoh T."/>
            <person name="Shirai Y."/>
            <person name="Takahashi Y."/>
            <person name="Nakagawa K."/>
            <person name="Okumura K."/>
            <person name="Nagase T."/>
            <person name="Nomura N."/>
            <person name="Kikuchi H."/>
            <person name="Masuho Y."/>
            <person name="Yamashita R."/>
            <person name="Nakai K."/>
            <person name="Yada T."/>
            <person name="Nakamura Y."/>
            <person name="Ohara O."/>
            <person name="Isogai T."/>
            <person name="Sugano S."/>
        </authorList>
    </citation>
    <scope>NUCLEOTIDE SEQUENCE [LARGE SCALE MRNA]</scope>
    <source>
        <tissue>Kidney</tissue>
    </source>
</reference>
<reference key="4">
    <citation type="submission" date="2005-09" db="EMBL/GenBank/DDBJ databases">
        <authorList>
            <person name="Mural R.J."/>
            <person name="Istrail S."/>
            <person name="Sutton G.G."/>
            <person name="Florea L."/>
            <person name="Halpern A.L."/>
            <person name="Mobarry C.M."/>
            <person name="Lippert R."/>
            <person name="Walenz B."/>
            <person name="Shatkay H."/>
            <person name="Dew I."/>
            <person name="Miller J.R."/>
            <person name="Flanigan M.J."/>
            <person name="Edwards N.J."/>
            <person name="Bolanos R."/>
            <person name="Fasulo D."/>
            <person name="Halldorsson B.V."/>
            <person name="Hannenhalli S."/>
            <person name="Turner R."/>
            <person name="Yooseph S."/>
            <person name="Lu F."/>
            <person name="Nusskern D.R."/>
            <person name="Shue B.C."/>
            <person name="Zheng X.H."/>
            <person name="Zhong F."/>
            <person name="Delcher A.L."/>
            <person name="Huson D.H."/>
            <person name="Kravitz S.A."/>
            <person name="Mouchard L."/>
            <person name="Reinert K."/>
            <person name="Remington K.A."/>
            <person name="Clark A.G."/>
            <person name="Waterman M.S."/>
            <person name="Eichler E.E."/>
            <person name="Adams M.D."/>
            <person name="Hunkapiller M.W."/>
            <person name="Myers E.W."/>
            <person name="Venter J.C."/>
        </authorList>
    </citation>
    <scope>NUCLEOTIDE SEQUENCE [LARGE SCALE GENOMIC DNA]</scope>
</reference>
<reference key="5">
    <citation type="journal article" date="2004" name="Genome Res.">
        <title>The status, quality, and expansion of the NIH full-length cDNA project: the Mammalian Gene Collection (MGC).</title>
        <authorList>
            <consortium name="The MGC Project Team"/>
        </authorList>
    </citation>
    <scope>NUCLEOTIDE SEQUENCE [LARGE SCALE MRNA]</scope>
    <scope>VARIANT HIS-252</scope>
    <source>
        <tissue>Lymph</tissue>
        <tissue>PNS</tissue>
        <tissue>Skin</tissue>
    </source>
</reference>
<reference key="6">
    <citation type="journal article" date="1998" name="Steroids">
        <title>The rat androgen-binding protein (ABP/SHBG) gene contains triplet repeats similar to unstable triplets: evidence that the ABP/SHBG and the fragile X-related 2 genes overlap.</title>
        <authorList>
            <person name="Joseph D.R."/>
        </authorList>
    </citation>
    <scope>NUCLEOTIDE SEQUENCE [GENOMIC DNA] OF 1-27</scope>
</reference>
<reference key="7">
    <citation type="journal article" date="1996" name="Mol. Cell. Biol.">
        <title>Specific sequences in the fragile X syndrome protein FMR1 and the FXR proteins mediate their binding to 60S ribosomal subunits and the interactions among them.</title>
        <authorList>
            <person name="Siomi M.C."/>
            <person name="Zhang Y."/>
            <person name="Siomi H."/>
            <person name="Dreyfuss G."/>
        </authorList>
    </citation>
    <scope>INTERACTION WITH FMR1</scope>
</reference>
<reference key="8">
    <citation type="journal article" date="1997" name="Hum. Mol. Genet.">
        <title>Differential expression of FMR1, FXR1 and FXR2 proteins in human brain and testis.</title>
        <authorList>
            <person name="Tamanini F."/>
            <person name="Willemsen R."/>
            <person name="van Unen L."/>
            <person name="Bontekoe C."/>
            <person name="Galjaard H."/>
            <person name="Oostra B.A."/>
            <person name="Hoogeveen A.T."/>
        </authorList>
    </citation>
    <scope>SUBCELLULAR LOCATION</scope>
    <scope>TISSUE SPECIFICITY</scope>
</reference>
<reference key="9">
    <citation type="journal article" date="2001" name="Hum. Mol. Genet.">
        <title>Evidence that fragile X mental retardation protein is a negative regulator of translation.</title>
        <authorList>
            <person name="Laggerbauer B."/>
            <person name="Ostareck D."/>
            <person name="Keidel E.M."/>
            <person name="Ostareck-Lederer A."/>
            <person name="Fischer U."/>
        </authorList>
    </citation>
    <scope>INTERACTION WITH FMR1</scope>
</reference>
<reference key="10">
    <citation type="journal article" date="2004" name="Anal. Chem.">
        <title>Robust phosphoproteomic profiling of tyrosine phosphorylation sites from human T cells using immobilized metal affinity chromatography and tandem mass spectrometry.</title>
        <authorList>
            <person name="Brill L.M."/>
            <person name="Salomon A.R."/>
            <person name="Ficarro S.B."/>
            <person name="Mukherji M."/>
            <person name="Stettler-Gill M."/>
            <person name="Peters E.C."/>
        </authorList>
    </citation>
    <scope>IDENTIFICATION BY MASS SPECTROMETRY [LARGE SCALE ANALYSIS]</scope>
    <source>
        <tissue>Leukemic T-cell</tissue>
    </source>
</reference>
<reference key="11">
    <citation type="journal article" date="2006" name="Cell">
        <title>Global, in vivo, and site-specific phosphorylation dynamics in signaling networks.</title>
        <authorList>
            <person name="Olsen J.V."/>
            <person name="Blagoev B."/>
            <person name="Gnad F."/>
            <person name="Macek B."/>
            <person name="Kumar C."/>
            <person name="Mortensen P."/>
            <person name="Mann M."/>
        </authorList>
    </citation>
    <scope>IDENTIFICATION BY MASS SPECTROMETRY [LARGE SCALE ANALYSIS]</scope>
    <source>
        <tissue>Cervix carcinoma</tissue>
    </source>
</reference>
<reference key="12">
    <citation type="journal article" date="2008" name="Hum. Mol. Genet.">
        <title>Tdrd3 is a novel stress granule-associated protein interacting with the Fragile-X syndrome protein FMRP.</title>
        <authorList>
            <person name="Linder B."/>
            <person name="Ploettner O."/>
            <person name="Kroiss M."/>
            <person name="Hartmann E."/>
            <person name="Laggerbauer B."/>
            <person name="Meister G."/>
            <person name="Keidel E."/>
            <person name="Fischer U."/>
        </authorList>
    </citation>
    <scope>INTERACTION WITH TDRD3</scope>
</reference>
<reference key="13">
    <citation type="journal article" date="2008" name="J. Proteome Res.">
        <title>Combining protein-based IMAC, peptide-based IMAC, and MudPIT for efficient phosphoproteomic analysis.</title>
        <authorList>
            <person name="Cantin G.T."/>
            <person name="Yi W."/>
            <person name="Lu B."/>
            <person name="Park S.K."/>
            <person name="Xu T."/>
            <person name="Lee J.-D."/>
            <person name="Yates J.R. III"/>
        </authorList>
    </citation>
    <scope>PHOSPHORYLATION [LARGE SCALE ANALYSIS] AT THR-598</scope>
    <scope>IDENTIFICATION BY MASS SPECTROMETRY [LARGE SCALE ANALYSIS]</scope>
    <source>
        <tissue>Cervix carcinoma</tissue>
    </source>
</reference>
<reference key="14">
    <citation type="journal article" date="2008" name="Mol. Cell">
        <title>Kinase-selective enrichment enables quantitative phosphoproteomics of the kinome across the cell cycle.</title>
        <authorList>
            <person name="Daub H."/>
            <person name="Olsen J.V."/>
            <person name="Bairlein M."/>
            <person name="Gnad F."/>
            <person name="Oppermann F.S."/>
            <person name="Korner R."/>
            <person name="Greff Z."/>
            <person name="Keri G."/>
            <person name="Stemmann O."/>
            <person name="Mann M."/>
        </authorList>
    </citation>
    <scope>IDENTIFICATION BY MASS SPECTROMETRY [LARGE SCALE ANALYSIS]</scope>
    <source>
        <tissue>Cervix carcinoma</tissue>
    </source>
</reference>
<reference key="15">
    <citation type="journal article" date="2008" name="Proc. Natl. Acad. Sci. U.S.A.">
        <title>A quantitative atlas of mitotic phosphorylation.</title>
        <authorList>
            <person name="Dephoure N."/>
            <person name="Zhou C."/>
            <person name="Villen J."/>
            <person name="Beausoleil S.A."/>
            <person name="Bakalarski C.E."/>
            <person name="Elledge S.J."/>
            <person name="Gygi S.P."/>
        </authorList>
    </citation>
    <scope>PHOSPHORYLATION [LARGE SCALE ANALYSIS] AT THR-411; SER-533; SER-566; THR-598; SER-601 AND SER-603</scope>
    <scope>IDENTIFICATION BY MASS SPECTROMETRY [LARGE SCALE ANALYSIS]</scope>
    <source>
        <tissue>Cervix carcinoma</tissue>
    </source>
</reference>
<reference key="16">
    <citation type="journal article" date="2009" name="Anal. Chem.">
        <title>Lys-N and trypsin cover complementary parts of the phosphoproteome in a refined SCX-based approach.</title>
        <authorList>
            <person name="Gauci S."/>
            <person name="Helbig A.O."/>
            <person name="Slijper M."/>
            <person name="Krijgsveld J."/>
            <person name="Heck A.J."/>
            <person name="Mohammed S."/>
        </authorList>
    </citation>
    <scope>IDENTIFICATION BY MASS SPECTROMETRY [LARGE SCALE ANALYSIS]</scope>
</reference>
<reference key="17">
    <citation type="journal article" date="2009" name="Sci. Signal.">
        <title>Quantitative phosphoproteomic analysis of T cell receptor signaling reveals system-wide modulation of protein-protein interactions.</title>
        <authorList>
            <person name="Mayya V."/>
            <person name="Lundgren D.H."/>
            <person name="Hwang S.-I."/>
            <person name="Rezaul K."/>
            <person name="Wu L."/>
            <person name="Eng J.K."/>
            <person name="Rodionov V."/>
            <person name="Han D.K."/>
        </authorList>
    </citation>
    <scope>PHOSPHORYLATION [LARGE SCALE ANALYSIS] AT THR-598; SER-601 AND SER-603</scope>
    <scope>IDENTIFICATION BY MASS SPECTROMETRY [LARGE SCALE ANALYSIS]</scope>
    <source>
        <tissue>Leukemic T-cell</tissue>
    </source>
</reference>
<reference key="18">
    <citation type="journal article" date="2010" name="Sci. Signal.">
        <title>Quantitative phosphoproteomics reveals widespread full phosphorylation site occupancy during mitosis.</title>
        <authorList>
            <person name="Olsen J.V."/>
            <person name="Vermeulen M."/>
            <person name="Santamaria A."/>
            <person name="Kumar C."/>
            <person name="Miller M.L."/>
            <person name="Jensen L.J."/>
            <person name="Gnad F."/>
            <person name="Cox J."/>
            <person name="Jensen T.S."/>
            <person name="Nigg E.A."/>
            <person name="Brunak S."/>
            <person name="Mann M."/>
        </authorList>
    </citation>
    <scope>PHOSPHORYLATION [LARGE SCALE ANALYSIS] AT SER-566 AND SER-603</scope>
    <scope>IDENTIFICATION BY MASS SPECTROMETRY [LARGE SCALE ANALYSIS]</scope>
    <source>
        <tissue>Cervix carcinoma</tissue>
    </source>
</reference>
<reference key="19">
    <citation type="journal article" date="2011" name="BMC Syst. Biol.">
        <title>Initial characterization of the human central proteome.</title>
        <authorList>
            <person name="Burkard T.R."/>
            <person name="Planyavsky M."/>
            <person name="Kaupe I."/>
            <person name="Breitwieser F.P."/>
            <person name="Buerckstuemmer T."/>
            <person name="Bennett K.L."/>
            <person name="Superti-Furga G."/>
            <person name="Colinge J."/>
        </authorList>
    </citation>
    <scope>IDENTIFICATION BY MASS SPECTROMETRY [LARGE SCALE ANALYSIS]</scope>
</reference>
<reference key="20">
    <citation type="journal article" date="2011" name="FEBS Lett.">
        <title>Evidence for the association of the human regulatory protein Ki-1/57 with the translational machinery.</title>
        <authorList>
            <person name="Goncalves K.A."/>
            <person name="Bressan G.C."/>
            <person name="Saito A."/>
            <person name="Morello L.G."/>
            <person name="Zanchin N.I."/>
            <person name="Kobarg J."/>
        </authorList>
    </citation>
    <scope>INTERACTION WITH HABP4</scope>
</reference>
<reference key="21">
    <citation type="journal article" date="2011" name="Sci. Signal.">
        <title>System-wide temporal characterization of the proteome and phosphoproteome of human embryonic stem cell differentiation.</title>
        <authorList>
            <person name="Rigbolt K.T."/>
            <person name="Prokhorova T.A."/>
            <person name="Akimov V."/>
            <person name="Henningsen J."/>
            <person name="Johansen P.T."/>
            <person name="Kratchmarova I."/>
            <person name="Kassem M."/>
            <person name="Mann M."/>
            <person name="Olsen J.V."/>
            <person name="Blagoev B."/>
        </authorList>
    </citation>
    <scope>PHOSPHORYLATION [LARGE SCALE ANALYSIS] AT SER-603</scope>
    <scope>IDENTIFICATION BY MASS SPECTROMETRY [LARGE SCALE ANALYSIS]</scope>
</reference>
<reference key="22">
    <citation type="journal article" date="2013" name="J. Proteome Res.">
        <title>Toward a comprehensive characterization of a human cancer cell phosphoproteome.</title>
        <authorList>
            <person name="Zhou H."/>
            <person name="Di Palma S."/>
            <person name="Preisinger C."/>
            <person name="Peng M."/>
            <person name="Polat A.N."/>
            <person name="Heck A.J."/>
            <person name="Mohammed S."/>
        </authorList>
    </citation>
    <scope>PHOSPHORYLATION [LARGE SCALE ANALYSIS] AT SER-192; SER-410; THR-411; SER-453; SER-566; SER-580; SER-601 AND SER-603</scope>
    <scope>IDENTIFICATION BY MASS SPECTROMETRY [LARGE SCALE ANALYSIS]</scope>
    <source>
        <tissue>Cervix carcinoma</tissue>
        <tissue>Erythroleukemia</tissue>
    </source>
</reference>
<reference key="23">
    <citation type="journal article" date="2014" name="J. Proteomics">
        <title>An enzyme assisted RP-RPLC approach for in-depth analysis of human liver phosphoproteome.</title>
        <authorList>
            <person name="Bian Y."/>
            <person name="Song C."/>
            <person name="Cheng K."/>
            <person name="Dong M."/>
            <person name="Wang F."/>
            <person name="Huang J."/>
            <person name="Sun D."/>
            <person name="Wang L."/>
            <person name="Ye M."/>
            <person name="Zou H."/>
        </authorList>
    </citation>
    <scope>PHOSPHORYLATION [LARGE SCALE ANALYSIS] AT THR-598 AND SER-601</scope>
    <scope>IDENTIFICATION BY MASS SPECTROMETRY [LARGE SCALE ANALYSIS]</scope>
    <source>
        <tissue>Liver</tissue>
    </source>
</reference>
<reference key="24">
    <citation type="journal article" date="2016" name="PLoS Pathog.">
        <title>New World and Old World Alphaviruses Have Evolved to Exploit Different Components of Stress Granules, FXR and G3BP Proteins, for Assembly of Viral Replication Complexes.</title>
        <authorList>
            <person name="Kim D.Y."/>
            <person name="Reynaud J.M."/>
            <person name="Rasalouskaya A."/>
            <person name="Akhrymuk I."/>
            <person name="Mobley J.A."/>
            <person name="Frolov I."/>
            <person name="Frolova E.I."/>
        </authorList>
    </citation>
    <scope>INTERACTION WITH VENEZUELAN EQUINE ENCEPHALITIS VIRUS NON-STRUCTURAL PROTEIN 3 (MICROBIAL INFECTION)</scope>
</reference>
<reference key="25">
    <citation type="journal article" date="2010" name="PLoS ONE">
        <title>Structural studies of the tandem Tudor domains of fragile X mental retardation related proteins FXR1 and FXR2.</title>
        <authorList>
            <person name="Adams-Cioaba M.A."/>
            <person name="Guo Y."/>
            <person name="Bian C."/>
            <person name="Amaya M.F."/>
            <person name="Lam R."/>
            <person name="Wasney G.A."/>
            <person name="Vedadi M."/>
            <person name="Xu C."/>
            <person name="Min J."/>
        </authorList>
    </citation>
    <scope>X-RAY CRYSTALLOGRAPHY (1.92 ANGSTROMS) OF 13-136</scope>
    <scope>DOMAINS TUDOR</scope>
</reference>
<gene>
    <name evidence="15 17" type="primary">FXR2</name>
    <name type="synonym">FMR1L2</name>
</gene>
<organism>
    <name type="scientific">Homo sapiens</name>
    <name type="common">Human</name>
    <dbReference type="NCBI Taxonomy" id="9606"/>
    <lineage>
        <taxon>Eukaryota</taxon>
        <taxon>Metazoa</taxon>
        <taxon>Chordata</taxon>
        <taxon>Craniata</taxon>
        <taxon>Vertebrata</taxon>
        <taxon>Euteleostomi</taxon>
        <taxon>Mammalia</taxon>
        <taxon>Eutheria</taxon>
        <taxon>Euarchontoglires</taxon>
        <taxon>Primates</taxon>
        <taxon>Haplorrhini</taxon>
        <taxon>Catarrhini</taxon>
        <taxon>Hominidae</taxon>
        <taxon>Homo</taxon>
    </lineage>
</organism>
<name>FXR2_HUMAN</name>
<protein>
    <recommendedName>
        <fullName evidence="16">RNA-binding protein FXR2</fullName>
        <shortName evidence="2">FXR2P</shortName>
    </recommendedName>
    <alternativeName>
        <fullName evidence="16">FMR1 autosomal homolog 2</fullName>
    </alternativeName>
</protein>
<feature type="chain" id="PRO_0000050110" description="RNA-binding protein FXR2">
    <location>
        <begin position="1"/>
        <end position="673"/>
    </location>
</feature>
<feature type="domain" description="Agenet-like 1" evidence="4">
    <location>
        <begin position="14"/>
        <end position="60"/>
    </location>
</feature>
<feature type="domain" description="Agenet-like 2" evidence="4">
    <location>
        <begin position="73"/>
        <end position="125"/>
    </location>
</feature>
<feature type="domain" description="KH 1" evidence="3">
    <location>
        <begin position="232"/>
        <end position="261"/>
    </location>
</feature>
<feature type="domain" description="KH 2" evidence="3">
    <location>
        <begin position="295"/>
        <end position="324"/>
    </location>
</feature>
<feature type="region of interest" description="Disordered" evidence="5">
    <location>
        <begin position="389"/>
        <end position="673"/>
    </location>
</feature>
<feature type="compositionally biased region" description="Polar residues" evidence="5">
    <location>
        <begin position="411"/>
        <end position="421"/>
    </location>
</feature>
<feature type="compositionally biased region" description="Basic and acidic residues" evidence="5">
    <location>
        <begin position="456"/>
        <end position="482"/>
    </location>
</feature>
<feature type="compositionally biased region" description="Acidic residues" evidence="5">
    <location>
        <begin position="525"/>
        <end position="535"/>
    </location>
</feature>
<feature type="compositionally biased region" description="Basic residues" evidence="5">
    <location>
        <begin position="583"/>
        <end position="595"/>
    </location>
</feature>
<feature type="compositionally biased region" description="Basic and acidic residues" evidence="5">
    <location>
        <begin position="620"/>
        <end position="635"/>
    </location>
</feature>
<feature type="modified residue" description="Phosphotyrosine" evidence="1">
    <location>
        <position position="78"/>
    </location>
</feature>
<feature type="modified residue" description="Phosphoserine" evidence="23">
    <location>
        <position position="192"/>
    </location>
</feature>
<feature type="modified residue" description="Phosphoserine" evidence="23">
    <location>
        <position position="410"/>
    </location>
</feature>
<feature type="modified residue" description="Phosphothreonine" evidence="19 23">
    <location>
        <position position="411"/>
    </location>
</feature>
<feature type="modified residue" description="Phosphoserine" evidence="1">
    <location>
        <position position="450"/>
    </location>
</feature>
<feature type="modified residue" description="Phosphoserine" evidence="23">
    <location>
        <position position="453"/>
    </location>
</feature>
<feature type="modified residue" description="Phosphoserine" evidence="19">
    <location>
        <position position="533"/>
    </location>
</feature>
<feature type="modified residue" description="Phosphoserine" evidence="19 21 23">
    <location>
        <position position="566"/>
    </location>
</feature>
<feature type="modified residue" description="Phosphoserine" evidence="23">
    <location>
        <position position="580"/>
    </location>
</feature>
<feature type="modified residue" description="Phosphothreonine" evidence="18 19 20 24">
    <location>
        <position position="598"/>
    </location>
</feature>
<feature type="modified residue" description="Phosphoserine" evidence="19 20 23 24">
    <location>
        <position position="601"/>
    </location>
</feature>
<feature type="modified residue" description="Phosphoserine" evidence="19 20 21 22 23">
    <location>
        <position position="603"/>
    </location>
</feature>
<feature type="sequence variant" id="VAR_067039" description="In dbSNP:rs17854734." evidence="7">
    <original>Q</original>
    <variation>H</variation>
    <location>
        <position position="252"/>
    </location>
</feature>
<feature type="sequence variant" id="VAR_055979" description="In dbSNP:rs36013555.">
    <original>R</original>
    <variation>P</variation>
    <location>
        <position position="591"/>
    </location>
</feature>
<feature type="sequence conflict" description="In Ref. 1; AAC50292." evidence="16" ref="1">
    <original>RP</original>
    <variation>SA</variation>
    <location>
        <begin position="625"/>
        <end position="626"/>
    </location>
</feature>
<feature type="strand" evidence="25">
    <location>
        <begin position="15"/>
        <end position="19"/>
    </location>
</feature>
<feature type="strand" evidence="25">
    <location>
        <begin position="25"/>
        <end position="33"/>
    </location>
</feature>
<feature type="strand" evidence="25">
    <location>
        <begin position="35"/>
        <end position="42"/>
    </location>
</feature>
<feature type="strand" evidence="25">
    <location>
        <begin position="50"/>
        <end position="53"/>
    </location>
</feature>
<feature type="helix" evidence="25">
    <location>
        <begin position="54"/>
        <end position="56"/>
    </location>
</feature>
<feature type="strand" evidence="25">
    <location>
        <begin position="74"/>
        <end position="79"/>
    </location>
</feature>
<feature type="strand" evidence="25">
    <location>
        <begin position="88"/>
        <end position="98"/>
    </location>
</feature>
<feature type="strand" evidence="25">
    <location>
        <begin position="101"/>
        <end position="106"/>
    </location>
</feature>
<feature type="strand" evidence="25">
    <location>
        <begin position="115"/>
        <end position="117"/>
    </location>
</feature>
<feature type="helix" evidence="25">
    <location>
        <begin position="119"/>
        <end position="121"/>
    </location>
</feature>
<feature type="strand" evidence="25">
    <location>
        <begin position="122"/>
        <end position="124"/>
    </location>
</feature>